<proteinExistence type="evidence at protein level"/>
<accession>O15287</accession>
<organism>
    <name type="scientific">Homo sapiens</name>
    <name type="common">Human</name>
    <dbReference type="NCBI Taxonomy" id="9606"/>
    <lineage>
        <taxon>Eukaryota</taxon>
        <taxon>Metazoa</taxon>
        <taxon>Chordata</taxon>
        <taxon>Craniata</taxon>
        <taxon>Vertebrata</taxon>
        <taxon>Euteleostomi</taxon>
        <taxon>Mammalia</taxon>
        <taxon>Eutheria</taxon>
        <taxon>Euarchontoglires</taxon>
        <taxon>Primates</taxon>
        <taxon>Haplorrhini</taxon>
        <taxon>Catarrhini</taxon>
        <taxon>Hominidae</taxon>
        <taxon>Homo</taxon>
    </lineage>
</organism>
<feature type="chain" id="PRO_0000106292" description="Fanconi anemia group G protein">
    <location>
        <begin position="1"/>
        <end position="622"/>
    </location>
</feature>
<feature type="repeat" description="TPR 1">
    <location>
        <begin position="246"/>
        <end position="279"/>
    </location>
</feature>
<feature type="repeat" description="TPR 2">
    <location>
        <begin position="344"/>
        <end position="377"/>
    </location>
</feature>
<feature type="repeat" description="TPR 3">
    <location>
        <begin position="453"/>
        <end position="486"/>
    </location>
</feature>
<feature type="repeat" description="TPR 4">
    <location>
        <begin position="514"/>
        <end position="547"/>
    </location>
</feature>
<feature type="modified residue" description="Phosphoserine" evidence="7">
    <location>
        <position position="7"/>
    </location>
</feature>
<feature type="sequence variant" id="VAR_017495" description="In FANCG; associated with a mild clinical phenotype; disruption of HES1-binding; no effect on FANCA-binding." evidence="1 8">
    <original>L</original>
    <variation>P</variation>
    <location>
        <position position="71"/>
    </location>
</feature>
<feature type="sequence variant" id="VAR_021103" description="In dbSNP:rs17880082." evidence="12">
    <original>G</original>
    <variation>E</variation>
    <location>
        <position position="294"/>
    </location>
</feature>
<feature type="sequence variant" id="VAR_020311" description="In dbSNP:rs2237857." evidence="12">
    <original>T</original>
    <variation>I</variation>
    <location>
        <position position="297"/>
    </location>
</feature>
<feature type="sequence variant" id="VAR_021104" description="In dbSNP:rs4986940." evidence="12">
    <original>P</original>
    <variation>S</variation>
    <location>
        <position position="330"/>
    </location>
</feature>
<feature type="sequence variant" id="VAR_021105" description="In dbSNP:rs4986939." evidence="12">
    <original>S</original>
    <variation>L</variation>
    <location>
        <position position="378"/>
    </location>
</feature>
<feature type="sequence variant" id="VAR_021106" description="In dbSNP:rs17881054." evidence="12">
    <original>K</original>
    <variation>E</variation>
    <location>
        <position position="430"/>
    </location>
</feature>
<feature type="sequence variant" id="VAR_021107" description="In dbSNP:rs17885240." evidence="12">
    <original>R</original>
    <variation>Q</variation>
    <location>
        <position position="513"/>
    </location>
</feature>
<feature type="sequence variant" id="VAR_021108" description="In dbSNP:rs17878854." evidence="12">
    <original>S</original>
    <variation>F</variation>
    <location>
        <position position="603"/>
    </location>
</feature>
<feature type="sequence variant" id="VAR_035864" description="In a colorectal cancer sample; somatic mutation; dbSNP:rs758407400." evidence="6">
    <original>A</original>
    <variation>T</variation>
    <location>
        <position position="607"/>
    </location>
</feature>
<feature type="mutagenesis site" description="Loss of BRCA2-, FANCD2- and XRCC3-binding. No effect on complex formation with FANCA and FANCF." evidence="7">
    <original>S</original>
    <variation>A</variation>
    <location>
        <position position="7"/>
    </location>
</feature>
<feature type="mutagenesis site" description="No effect on BRCA2-, FANCA-, FANCF-, nor XRCC3-binding." evidence="7">
    <original>S</original>
    <variation>A</variation>
    <location>
        <position position="383"/>
    </location>
</feature>
<feature type="mutagenesis site" description="No effect on BRCA2-, FANCA-, FANCF-, nor XRCC3-binding." evidence="7">
    <original>S</original>
    <variation>A</variation>
    <location>
        <position position="387"/>
    </location>
</feature>
<feature type="mutagenesis site" description="No effect on HES1-, nor FANCA-binding." evidence="8">
    <original>G</original>
    <variation>R</variation>
    <location>
        <position position="546"/>
    </location>
</feature>
<gene>
    <name type="primary">FANCG</name>
    <name type="synonym">XRCC9</name>
</gene>
<evidence type="ECO:0000269" key="1">
    <source>
    </source>
</evidence>
<evidence type="ECO:0000269" key="2">
    <source>
    </source>
</evidence>
<evidence type="ECO:0000269" key="3">
    <source>
    </source>
</evidence>
<evidence type="ECO:0000269" key="4">
    <source>
    </source>
</evidence>
<evidence type="ECO:0000269" key="5">
    <source>
    </source>
</evidence>
<evidence type="ECO:0000269" key="6">
    <source>
    </source>
</evidence>
<evidence type="ECO:0000269" key="7">
    <source>
    </source>
</evidence>
<evidence type="ECO:0000269" key="8">
    <source>
    </source>
</evidence>
<evidence type="ECO:0000269" key="9">
    <source>
    </source>
</evidence>
<evidence type="ECO:0000269" key="10">
    <source>
    </source>
</evidence>
<evidence type="ECO:0000269" key="11">
    <source>
    </source>
</evidence>
<evidence type="ECO:0000269" key="12">
    <source ref="3"/>
</evidence>
<keyword id="KW-0002">3D-structure</keyword>
<keyword id="KW-0963">Cytoplasm</keyword>
<keyword id="KW-0225">Disease variant</keyword>
<keyword id="KW-0227">DNA damage</keyword>
<keyword id="KW-0234">DNA repair</keyword>
<keyword id="KW-0923">Fanconi anemia</keyword>
<keyword id="KW-0539">Nucleus</keyword>
<keyword id="KW-0597">Phosphoprotein</keyword>
<keyword id="KW-1267">Proteomics identification</keyword>
<keyword id="KW-1185">Reference proteome</keyword>
<keyword id="KW-0677">Repeat</keyword>
<keyword id="KW-0802">TPR repeat</keyword>
<sequence length="622" mass="68554">MSRQTTSVGSSCLDLWREKNDRLVRQAKVAQNSGLTLRRQQLAQDALEGLRGLLHSLQGLPAAVPVLPLELTVTCNFIILRASLAQGFTEDQAQDIQRSLERVLETQEQQGPRLEQGLRELWDSVLRASCLLPELLSALHRLVGLQAALWLSADRLGDLALLLETLNGSQSGASKDLLLLLKTWSPPAEELDAPLTLQDAQGLKDVLLTAFAYRQGLQELITGNPDKALSSLHEAASGLCPRPVLVQVYTALGSCHRKMGNPQRALLYLVAALKEGSAWGPPLLEASRLYQQLGDTTAELESLELLVEALNVPCSSKAPQFLIEVELLLPPPDLASPLHCGTQSQTKHILASRCLQTGRAGDAAEHYLDLLALLLDSSEPRFSPPPSPPGPCMPEVFLEAAVALIQAGRAQDALTLCEELLSRTSSLLPKMSRLWEDARKGTKELPYCPLWVSATHLLQGQAWVQLGAQKVAISEFSRCLELLFRATPEEKEQGAAFNCEQGCKSDAALQQLRAAALISRGLEWVASGQDTKALQDFLLSVQMCPGNRDTYFHLLQTLKRLDRRDEATALWWRLEAQTKGSHEDALWSLPLYLESYLSWIRPSDRDAFLEEFRTSLPKSCDL</sequence>
<protein>
    <recommendedName>
        <fullName>Fanconi anemia group G protein</fullName>
        <shortName>Protein FACG</shortName>
    </recommendedName>
    <alternativeName>
        <fullName>DNA repair protein XRCC9</fullName>
    </alternativeName>
</protein>
<reference key="1">
    <citation type="journal article" date="1997" name="Proc. Natl. Acad. Sci. U.S.A.">
        <title>The human XRCC9 gene corrects chromosomal instability and mutagen sensitivities in CHO UV40 cells.</title>
        <authorList>
            <person name="Liu N."/>
            <person name="Lamerdin J.E."/>
            <person name="Tucker J.D."/>
            <person name="Zhou Z.-Q."/>
            <person name="Walter C.A."/>
            <person name="Albala J.S."/>
            <person name="Busch D.B."/>
            <person name="Thompson L.H."/>
        </authorList>
    </citation>
    <scope>NUCLEOTIDE SEQUENCE [MRNA]</scope>
</reference>
<reference key="2">
    <citation type="journal article" date="1998" name="Nat. Genet.">
        <title>The Fanconi anaemia group G gene FANCG is identical with XRCC9.</title>
        <authorList>
            <person name="De Winter J.P."/>
            <person name="Waisfisz Q."/>
            <person name="Rooimans M.A."/>
            <person name="Van Berkel C.G.M."/>
            <person name="Bosnoyan-Collins L."/>
            <person name="Alon N."/>
            <person name="Carreau M."/>
            <person name="Bender O."/>
            <person name="Demuth I."/>
            <person name="Schindler D."/>
            <person name="Pronk J.C."/>
            <person name="Arwert F."/>
            <person name="Hoehn H."/>
            <person name="Digweed M."/>
            <person name="Buchwald M."/>
            <person name="Joenje H."/>
        </authorList>
    </citation>
    <scope>NUCLEOTIDE SEQUENCE [GENOMIC DNA / MRNA]</scope>
</reference>
<reference key="3">
    <citation type="submission" date="2004-10" db="EMBL/GenBank/DDBJ databases">
        <authorList>
            <consortium name="NIEHS SNPs program"/>
        </authorList>
    </citation>
    <scope>NUCLEOTIDE SEQUENCE [GENOMIC DNA]</scope>
    <scope>VARIANTS GLU-294; ILE-297; SER-330; LEU-378; GLU-430; GLN-513 AND PHE-603</scope>
</reference>
<reference key="4">
    <citation type="journal article" date="2004" name="Nature">
        <title>DNA sequence and analysis of human chromosome 9.</title>
        <authorList>
            <person name="Humphray S.J."/>
            <person name="Oliver K."/>
            <person name="Hunt A.R."/>
            <person name="Plumb R.W."/>
            <person name="Loveland J.E."/>
            <person name="Howe K.L."/>
            <person name="Andrews T.D."/>
            <person name="Searle S."/>
            <person name="Hunt S.E."/>
            <person name="Scott C.E."/>
            <person name="Jones M.C."/>
            <person name="Ainscough R."/>
            <person name="Almeida J.P."/>
            <person name="Ambrose K.D."/>
            <person name="Ashwell R.I.S."/>
            <person name="Babbage A.K."/>
            <person name="Babbage S."/>
            <person name="Bagguley C.L."/>
            <person name="Bailey J."/>
            <person name="Banerjee R."/>
            <person name="Barker D.J."/>
            <person name="Barlow K.F."/>
            <person name="Bates K."/>
            <person name="Beasley H."/>
            <person name="Beasley O."/>
            <person name="Bird C.P."/>
            <person name="Bray-Allen S."/>
            <person name="Brown A.J."/>
            <person name="Brown J.Y."/>
            <person name="Burford D."/>
            <person name="Burrill W."/>
            <person name="Burton J."/>
            <person name="Carder C."/>
            <person name="Carter N.P."/>
            <person name="Chapman J.C."/>
            <person name="Chen Y."/>
            <person name="Clarke G."/>
            <person name="Clark S.Y."/>
            <person name="Clee C.M."/>
            <person name="Clegg S."/>
            <person name="Collier R.E."/>
            <person name="Corby N."/>
            <person name="Crosier M."/>
            <person name="Cummings A.T."/>
            <person name="Davies J."/>
            <person name="Dhami P."/>
            <person name="Dunn M."/>
            <person name="Dutta I."/>
            <person name="Dyer L.W."/>
            <person name="Earthrowl M.E."/>
            <person name="Faulkner L."/>
            <person name="Fleming C.J."/>
            <person name="Frankish A."/>
            <person name="Frankland J.A."/>
            <person name="French L."/>
            <person name="Fricker D.G."/>
            <person name="Garner P."/>
            <person name="Garnett J."/>
            <person name="Ghori J."/>
            <person name="Gilbert J.G.R."/>
            <person name="Glison C."/>
            <person name="Grafham D.V."/>
            <person name="Gribble S."/>
            <person name="Griffiths C."/>
            <person name="Griffiths-Jones S."/>
            <person name="Grocock R."/>
            <person name="Guy J."/>
            <person name="Hall R.E."/>
            <person name="Hammond S."/>
            <person name="Harley J.L."/>
            <person name="Harrison E.S.I."/>
            <person name="Hart E.A."/>
            <person name="Heath P.D."/>
            <person name="Henderson C.D."/>
            <person name="Hopkins B.L."/>
            <person name="Howard P.J."/>
            <person name="Howden P.J."/>
            <person name="Huckle E."/>
            <person name="Johnson C."/>
            <person name="Johnson D."/>
            <person name="Joy A.A."/>
            <person name="Kay M."/>
            <person name="Keenan S."/>
            <person name="Kershaw J.K."/>
            <person name="Kimberley A.M."/>
            <person name="King A."/>
            <person name="Knights A."/>
            <person name="Laird G.K."/>
            <person name="Langford C."/>
            <person name="Lawlor S."/>
            <person name="Leongamornlert D.A."/>
            <person name="Leversha M."/>
            <person name="Lloyd C."/>
            <person name="Lloyd D.M."/>
            <person name="Lovell J."/>
            <person name="Martin S."/>
            <person name="Mashreghi-Mohammadi M."/>
            <person name="Matthews L."/>
            <person name="McLaren S."/>
            <person name="McLay K.E."/>
            <person name="McMurray A."/>
            <person name="Milne S."/>
            <person name="Nickerson T."/>
            <person name="Nisbett J."/>
            <person name="Nordsiek G."/>
            <person name="Pearce A.V."/>
            <person name="Peck A.I."/>
            <person name="Porter K.M."/>
            <person name="Pandian R."/>
            <person name="Pelan S."/>
            <person name="Phillimore B."/>
            <person name="Povey S."/>
            <person name="Ramsey Y."/>
            <person name="Rand V."/>
            <person name="Scharfe M."/>
            <person name="Sehra H.K."/>
            <person name="Shownkeen R."/>
            <person name="Sims S.K."/>
            <person name="Skuce C.D."/>
            <person name="Smith M."/>
            <person name="Steward C.A."/>
            <person name="Swarbreck D."/>
            <person name="Sycamore N."/>
            <person name="Tester J."/>
            <person name="Thorpe A."/>
            <person name="Tracey A."/>
            <person name="Tromans A."/>
            <person name="Thomas D.W."/>
            <person name="Wall M."/>
            <person name="Wallis J.M."/>
            <person name="West A.P."/>
            <person name="Whitehead S.L."/>
            <person name="Willey D.L."/>
            <person name="Williams S.A."/>
            <person name="Wilming L."/>
            <person name="Wray P.W."/>
            <person name="Young L."/>
            <person name="Ashurst J.L."/>
            <person name="Coulson A."/>
            <person name="Blocker H."/>
            <person name="Durbin R.M."/>
            <person name="Sulston J.E."/>
            <person name="Hubbard T."/>
            <person name="Jackson M.J."/>
            <person name="Bentley D.R."/>
            <person name="Beck S."/>
            <person name="Rogers J."/>
            <person name="Dunham I."/>
        </authorList>
    </citation>
    <scope>NUCLEOTIDE SEQUENCE [LARGE SCALE GENOMIC DNA]</scope>
</reference>
<reference key="5">
    <citation type="journal article" date="2004" name="Genome Res.">
        <title>The status, quality, and expansion of the NIH full-length cDNA project: the Mammalian Gene Collection (MGC).</title>
        <authorList>
            <consortium name="The MGC Project Team"/>
        </authorList>
    </citation>
    <scope>NUCLEOTIDE SEQUENCE [LARGE SCALE MRNA]</scope>
    <source>
        <tissue>Kidney</tissue>
        <tissue>Uterus</tissue>
    </source>
</reference>
<reference key="6">
    <citation type="journal article" date="1999" name="Mol. Cell. Biol.">
        <title>Fanconi anemia proteins FANCA, FANCC, and FANCG/XRCC9 interact in a functional nuclear complex.</title>
        <authorList>
            <person name="Garcia-Higuera I."/>
            <person name="Kuang Y."/>
            <person name="Naf D."/>
            <person name="Wasik J."/>
            <person name="D'Andrea A.D."/>
        </authorList>
    </citation>
    <scope>CHARACTERIZATION</scope>
</reference>
<reference key="7">
    <citation type="journal article" date="2003" name="Mol. Cell. Biol.">
        <title>A multiprotein nuclear complex connects Fanconi anemia and Bloom syndrome.</title>
        <authorList>
            <person name="Meetei A.R."/>
            <person name="Sechi S."/>
            <person name="Wallisch M."/>
            <person name="Yang D."/>
            <person name="Young M.K."/>
            <person name="Joenje H."/>
            <person name="Hoatlin M.E."/>
            <person name="Wang W."/>
        </authorList>
    </citation>
    <scope>IDENTIFICATION IN A COMPLEX WITH FANCA; FANCC; FANCE; FANCF AND FANCL</scope>
</reference>
<reference key="8">
    <citation type="journal article" date="2004" name="J. Biol. Chem.">
        <title>The Fanconi anemia proteins functionally interact with the protein kinase regulated by RNA (PKR).</title>
        <authorList>
            <person name="Zhang X."/>
            <person name="Li J."/>
            <person name="Sejas D.P."/>
            <person name="Rathbun K.R."/>
            <person name="Bagby G.C."/>
            <person name="Pang Q."/>
        </authorList>
    </citation>
    <scope>IDENTIFICATION IN A COMPLEX WITH EIF2AK2; FANCA; FANCC AND HSP70</scope>
</reference>
<reference key="9">
    <citation type="journal article" date="2004" name="Nat. Genet.">
        <title>X-linked inheritance of Fanconi anemia complementation group B.</title>
        <authorList>
            <person name="Meetei A.R."/>
            <person name="Levitus M."/>
            <person name="Xue Y."/>
            <person name="Medhurst A.L."/>
            <person name="Zwaan M."/>
            <person name="Ling C."/>
            <person name="Rooimans M.A."/>
            <person name="Bier P."/>
            <person name="Hoatlin M."/>
            <person name="Pals G."/>
            <person name="de Winter J.P."/>
            <person name="Wang W."/>
            <person name="Joenje H."/>
        </authorList>
    </citation>
    <scope>IDENTIFICATION IN A COMPLEX WITH FANCA; FANCB; FANCC; FANCE; FANCF AND FANCL</scope>
</reference>
<reference key="10">
    <citation type="journal article" date="2005" name="Nat. Genet.">
        <title>A human ortholog of archaeal DNA repair protein Hef is defective in Fanconi anemia complementation group M.</title>
        <authorList>
            <person name="Meetei A.R."/>
            <person name="Medhurst A.L."/>
            <person name="Ling C."/>
            <person name="Xue Y."/>
            <person name="Singh T.R."/>
            <person name="Bier P."/>
            <person name="Steltenpool J."/>
            <person name="Stone S."/>
            <person name="Dokal I."/>
            <person name="Mathew C.G."/>
            <person name="Hoatlin M."/>
            <person name="Joenje H."/>
            <person name="de Winter J.P."/>
            <person name="Wang W."/>
        </authorList>
    </citation>
    <scope>IDENTIFICATION IN A COMPLEX WITH FANCA; FANCB; FANCC; FANCE; FANCF; FANCL AND FANCM</scope>
</reference>
<reference key="11">
    <citation type="journal article" date="2008" name="Oncogene">
        <title>FANCG promotes formation of a newly identified protein complex containing BRCA2, FANCD2 and XRCC3.</title>
        <authorList>
            <person name="Wilson J.B."/>
            <person name="Yamamoto K."/>
            <person name="Marriott A.S."/>
            <person name="Hussain S."/>
            <person name="Sung P."/>
            <person name="Hoatlin M.E."/>
            <person name="Mathew C.G."/>
            <person name="Takata M."/>
            <person name="Thompson L.H."/>
            <person name="Kupfer G.M."/>
            <person name="Jones N.J."/>
        </authorList>
    </citation>
    <scope>INTERACTION WITH BRCA2; FANCD2 AND XRCC3</scope>
    <scope>PHOSPHORYLATION AT SER-7</scope>
    <scope>MUTAGENESIS OF SER-7; SER-383 AND SER-387</scope>
</reference>
<reference key="12">
    <citation type="journal article" date="2012" name="Blood">
        <title>FAAP20: a novel ubiquitin-binding FA nuclear core-complex protein required for functional integrity of the FA-BRCA DNA repair pathway.</title>
        <authorList>
            <person name="Ali A.M."/>
            <person name="Pradhan A."/>
            <person name="Singh T.R."/>
            <person name="Du C."/>
            <person name="Li J."/>
            <person name="Wahengbam K."/>
            <person name="Grassman E."/>
            <person name="Auerbach A.D."/>
            <person name="Pang Q."/>
            <person name="Meetei A.R."/>
        </authorList>
    </citation>
    <scope>IDENTIFICATION IN THE FA COMPLEX</scope>
</reference>
<reference key="13">
    <citation type="journal article" date="2012" name="Mol. Cell">
        <title>A ubiquitin-binding protein, FAAP20, links RNF8-mediated ubiquitination to the Fanconi anemia DNA repair network.</title>
        <authorList>
            <person name="Yan Z."/>
            <person name="Guo R."/>
            <person name="Paramasivam M."/>
            <person name="Shen W."/>
            <person name="Ling C."/>
            <person name="Fox D. III"/>
            <person name="Wang Y."/>
            <person name="Oostra A.B."/>
            <person name="Kuehl J."/>
            <person name="Lee D.Y."/>
            <person name="Takata M."/>
            <person name="Hoatlin M.E."/>
            <person name="Schindler D."/>
            <person name="Joenje H."/>
            <person name="de Winter J.P."/>
            <person name="Li L."/>
            <person name="Seidman M.M."/>
            <person name="Wang W."/>
        </authorList>
    </citation>
    <scope>IDENTIFICATION IN THE FA COMPLEX</scope>
</reference>
<reference key="14">
    <citation type="journal article" date="2012" name="Nat. Struct. Mol. Biol.">
        <title>Regulation of Rev1 by the Fanconi anemia core complex.</title>
        <authorList>
            <person name="Kim H."/>
            <person name="Yang K."/>
            <person name="Dejsuphong D."/>
            <person name="D'Andrea A.D."/>
        </authorList>
    </citation>
    <scope>IDENTIFICATION IN THE FA COMPLEX</scope>
</reference>
<reference key="15">
    <citation type="journal article" date="2000" name="Eur. J. Hum. Genet.">
        <title>Spectrum of mutations in the Fanconi anaemia group G gene, FANCG/XRCC9.</title>
        <authorList>
            <person name="Demuth I."/>
            <person name="Wlodarski M."/>
            <person name="Tipping A.J."/>
            <person name="Morgan N.V."/>
            <person name="de Winter J.P."/>
            <person name="Thiel M."/>
            <person name="Grasl S."/>
            <person name="Schindler D."/>
            <person name="D'Andrea A.D."/>
            <person name="Altay C."/>
            <person name="Kayserili H."/>
            <person name="Zatterale A."/>
            <person name="Kunze J."/>
            <person name="Ebell W."/>
            <person name="Mathew C.G."/>
            <person name="Joenje H."/>
            <person name="Sperling K."/>
            <person name="Digweed M."/>
        </authorList>
    </citation>
    <scope>VARIANT FANCG PRO-71</scope>
</reference>
<reference key="16">
    <citation type="journal article" date="2006" name="Science">
        <title>The consensus coding sequences of human breast and colorectal cancers.</title>
        <authorList>
            <person name="Sjoeblom T."/>
            <person name="Jones S."/>
            <person name="Wood L.D."/>
            <person name="Parsons D.W."/>
            <person name="Lin J."/>
            <person name="Barber T.D."/>
            <person name="Mandelker D."/>
            <person name="Leary R.J."/>
            <person name="Ptak J."/>
            <person name="Silliman N."/>
            <person name="Szabo S."/>
            <person name="Buckhaults P."/>
            <person name="Farrell C."/>
            <person name="Meeh P."/>
            <person name="Markowitz S.D."/>
            <person name="Willis J."/>
            <person name="Dawson D."/>
            <person name="Willson J.K.V."/>
            <person name="Gazdar A.F."/>
            <person name="Hartigan J."/>
            <person name="Wu L."/>
            <person name="Liu C."/>
            <person name="Parmigiani G."/>
            <person name="Park B.H."/>
            <person name="Bachman K.E."/>
            <person name="Papadopoulos N."/>
            <person name="Vogelstein B."/>
            <person name="Kinzler K.W."/>
            <person name="Velculescu V.E."/>
        </authorList>
    </citation>
    <scope>VARIANT [LARGE SCALE ANALYSIS] THR-607</scope>
</reference>
<reference key="17">
    <citation type="journal article" date="2008" name="Blood">
        <title>HES1 is a novel interactor of the Fanconi anemia core complex.</title>
        <authorList>
            <person name="Tremblay C.S."/>
            <person name="Huang F.F."/>
            <person name="Habi O."/>
            <person name="Huard C.C."/>
            <person name="Godin C."/>
            <person name="Levesque G."/>
            <person name="Carreau M."/>
        </authorList>
    </citation>
    <scope>VARIANT FANCG PRO-71</scope>
    <scope>INTERACTION WITH HES1</scope>
    <scope>SUBCELLULAR LOCATION</scope>
    <scope>MUTAGENESIS OF GLY-546</scope>
</reference>
<comment type="function">
    <text>DNA repair protein that may operate in a postreplication repair or a cell cycle checkpoint function. May be implicated in interstrand DNA cross-link repair and in the maintenance of normal chromosome stability. Candidate tumor suppressor gene.</text>
</comment>
<comment type="subunit">
    <text evidence="2 3 4 5 7 8 9 10 11">Belongs to the multisubunit FA complex composed of FANCA, FANCB, FANCC, FANCE, FANCF, FANCG, FANCL/PHF9 and FANCM. The complex is not found in FA patients. In complex with FANCF, FANCA and FANCL, but not with FANCC, nor FANCE, interacts with HES1; this interaction may be essential for the stability and nuclear localization of FA core complex proteins. The complex with FANCC and FANCG may also include EIF2AK2 and HSP70. When phosphorylated at Ser-7, forms a complex with BRCA2, FANCD2 and XRCC3.</text>
</comment>
<comment type="interaction">
    <interactant intactId="EBI-81610">
        <id>O15287</id>
    </interactant>
    <interactant intactId="EBI-21535880">
        <id>Q92870-2</id>
        <label>APBB2</label>
    </interactant>
    <organismsDiffer>false</organismsDiffer>
    <experiments>3</experiments>
</comment>
<comment type="interaction">
    <interactant intactId="EBI-81610">
        <id>O15287</id>
    </interactant>
    <interactant intactId="EBI-946046">
        <id>P54252</id>
        <label>ATXN3</label>
    </interactant>
    <organismsDiffer>false</organismsDiffer>
    <experiments>3</experiments>
</comment>
<comment type="interaction">
    <interactant intactId="EBI-81610">
        <id>O15287</id>
    </interactant>
    <interactant intactId="EBI-10175300">
        <id>Q8TD31-3</id>
        <label>CCHCR1</label>
    </interactant>
    <organismsDiffer>false</organismsDiffer>
    <experiments>3</experiments>
</comment>
<comment type="interaction">
    <interactant intactId="EBI-81610">
        <id>O15287</id>
    </interactant>
    <interactant intactId="EBI-3928618">
        <id>P08684</id>
        <label>CYP3A4</label>
    </interactant>
    <organismsDiffer>false</organismsDiffer>
    <experiments>3</experiments>
</comment>
<comment type="interaction">
    <interactant intactId="EBI-81610">
        <id>O15287</id>
    </interactant>
    <interactant intactId="EBI-10976677">
        <id>G5E9A7</id>
        <label>DMWD</label>
    </interactant>
    <organismsDiffer>false</organismsDiffer>
    <experiments>3</experiments>
</comment>
<comment type="interaction">
    <interactant intactId="EBI-81610">
        <id>O15287</id>
    </interactant>
    <interactant intactId="EBI-81570">
        <id>O15360</id>
        <label>FANCA</label>
    </interactant>
    <organismsDiffer>false</organismsDiffer>
    <experiments>23</experiments>
</comment>
<comment type="interaction">
    <interactant intactId="EBI-81610">
        <id>O15287</id>
    </interactant>
    <interactant intactId="EBI-21315382">
        <id>O15360-3</id>
        <label>FANCA</label>
    </interactant>
    <organismsDiffer>false</organismsDiffer>
    <experiments>5</experiments>
</comment>
<comment type="interaction">
    <interactant intactId="EBI-81610">
        <id>O15287</id>
    </interactant>
    <interactant intactId="EBI-81589">
        <id>Q9NPI8</id>
        <label>FANCF</label>
    </interactant>
    <organismsDiffer>false</organismsDiffer>
    <experiments>4</experiments>
</comment>
<comment type="interaction">
    <interactant intactId="EBI-81610">
        <id>O15287</id>
    </interactant>
    <interactant intactId="EBI-744302">
        <id>P14136</id>
        <label>GFAP</label>
    </interactant>
    <organismsDiffer>false</organismsDiffer>
    <experiments>3</experiments>
</comment>
<comment type="interaction">
    <interactant intactId="EBI-81610">
        <id>O15287</id>
    </interactant>
    <interactant intactId="EBI-1955541">
        <id>Q53GS7</id>
        <label>GLE1</label>
    </interactant>
    <organismsDiffer>false</organismsDiffer>
    <experiments>3</experiments>
</comment>
<comment type="interaction">
    <interactant intactId="EBI-81610">
        <id>O15287</id>
    </interactant>
    <interactant intactId="EBI-352682">
        <id>P04792</id>
        <label>HSPB1</label>
    </interactant>
    <organismsDiffer>false</organismsDiffer>
    <experiments>3</experiments>
</comment>
<comment type="interaction">
    <interactant intactId="EBI-81610">
        <id>O15287</id>
    </interactant>
    <interactant intactId="EBI-1055254">
        <id>Q8WXH2</id>
        <label>JPH3</label>
    </interactant>
    <organismsDiffer>false</organismsDiffer>
    <experiments>3</experiments>
</comment>
<comment type="interaction">
    <interactant intactId="EBI-81610">
        <id>O15287</id>
    </interactant>
    <interactant intactId="EBI-10975473">
        <id>O60333-2</id>
        <label>KIF1B</label>
    </interactant>
    <organismsDiffer>false</organismsDiffer>
    <experiments>3</experiments>
</comment>
<comment type="interaction">
    <interactant intactId="EBI-81610">
        <id>O15287</id>
    </interactant>
    <interactant intactId="EBI-948266">
        <id>O14901</id>
        <label>KLF11</label>
    </interactant>
    <organismsDiffer>false</organismsDiffer>
    <experiments>3</experiments>
</comment>
<comment type="interaction">
    <interactant intactId="EBI-81610">
        <id>O15287</id>
    </interactant>
    <interactant intactId="EBI-713665">
        <id>P19404</id>
        <label>NDUFV2</label>
    </interactant>
    <organismsDiffer>false</organismsDiffer>
    <experiments>3</experiments>
</comment>
<comment type="interaction">
    <interactant intactId="EBI-81610">
        <id>O15287</id>
    </interactant>
    <interactant intactId="EBI-1391623">
        <id>P29474</id>
        <label>NOS3</label>
    </interactant>
    <organismsDiffer>false</organismsDiffer>
    <experiments>3</experiments>
</comment>
<comment type="interaction">
    <interactant intactId="EBI-81610">
        <id>O15287</id>
    </interactant>
    <interactant intactId="EBI-2811583">
        <id>Q9BVL2</id>
        <label>NUP58</label>
    </interactant>
    <organismsDiffer>false</organismsDiffer>
    <experiments>3</experiments>
</comment>
<comment type="interaction">
    <interactant intactId="EBI-81610">
        <id>O15287</id>
    </interactant>
    <interactant intactId="EBI-716404">
        <id>P16284</id>
        <label>PECAM1</label>
    </interactant>
    <organismsDiffer>false</organismsDiffer>
    <experiments>3</experiments>
</comment>
<comment type="interaction">
    <interactant intactId="EBI-81610">
        <id>O15287</id>
    </interactant>
    <interactant intactId="EBI-2827556">
        <id>Q13393</id>
        <label>PLD1</label>
    </interactant>
    <organismsDiffer>false</organismsDiffer>
    <experiments>3</experiments>
</comment>
<comment type="interaction">
    <interactant intactId="EBI-81610">
        <id>O15287</id>
    </interactant>
    <interactant intactId="EBI-2798416">
        <id>Q99633</id>
        <label>PRPF18</label>
    </interactant>
    <organismsDiffer>false</organismsDiffer>
    <experiments>3</experiments>
</comment>
<comment type="interaction">
    <interactant intactId="EBI-81610">
        <id>O15287</id>
    </interactant>
    <interactant intactId="EBI-749195">
        <id>P60891</id>
        <label>PRPS1</label>
    </interactant>
    <organismsDiffer>false</organismsDiffer>
    <experiments>3</experiments>
</comment>
<comment type="interaction">
    <interactant intactId="EBI-81610">
        <id>O15287</id>
    </interactant>
    <interactant intactId="EBI-399437">
        <id>P20339</id>
        <label>RAB5A</label>
    </interactant>
    <organismsDiffer>false</organismsDiffer>
    <experiments>3</experiments>
</comment>
<comment type="interaction">
    <interactant intactId="EBI-81610">
        <id>O15287</id>
    </interactant>
    <interactant intactId="EBI-5235340">
        <id>Q7Z699</id>
        <label>SPRED1</label>
    </interactant>
    <organismsDiffer>false</organismsDiffer>
    <experiments>3</experiments>
</comment>
<comment type="interaction">
    <interactant intactId="EBI-81610">
        <id>O15287</id>
    </interactant>
    <interactant intactId="EBI-351450">
        <id>Q13813</id>
        <label>SPTAN1</label>
    </interactant>
    <organismsDiffer>false</organismsDiffer>
    <experiments>4</experiments>
</comment>
<comment type="interaction">
    <interactant intactId="EBI-81610">
        <id>O15287</id>
    </interactant>
    <interactant intactId="EBI-3921347">
        <id>P51687</id>
        <label>SUOX</label>
    </interactant>
    <organismsDiffer>false</organismsDiffer>
    <experiments>3</experiments>
</comment>
<comment type="interaction">
    <interactant intactId="EBI-81610">
        <id>O15287</id>
    </interactant>
    <interactant intactId="EBI-11955057">
        <id>Q8N8B7-2</id>
        <label>TCEANC</label>
    </interactant>
    <organismsDiffer>false</organismsDiffer>
    <experiments>3</experiments>
</comment>
<comment type="interaction">
    <interactant intactId="EBI-81610">
        <id>O15287</id>
    </interactant>
    <interactant intactId="EBI-14115717">
        <id>Q8N7U7-2</id>
        <label>TPRX1</label>
    </interactant>
    <organismsDiffer>false</organismsDiffer>
    <experiments>3</experiments>
</comment>
<comment type="interaction">
    <interactant intactId="EBI-81610">
        <id>O15287</id>
    </interactant>
    <interactant intactId="EBI-353844">
        <id>P08670</id>
        <label>VIM</label>
    </interactant>
    <organismsDiffer>false</organismsDiffer>
    <experiments>3</experiments>
</comment>
<comment type="interaction">
    <interactant intactId="EBI-81610">
        <id>O15287</id>
    </interactant>
    <interactant intactId="EBI-720609">
        <id>O76024</id>
        <label>WFS1</label>
    </interactant>
    <organismsDiffer>false</organismsDiffer>
    <experiments>3</experiments>
</comment>
<comment type="interaction">
    <interactant intactId="EBI-81610">
        <id>O15287</id>
    </interactant>
    <interactant intactId="EBI-7233259">
        <id>Q86UD4</id>
        <label>ZNF329</label>
    </interactant>
    <organismsDiffer>false</organismsDiffer>
    <experiments>3</experiments>
</comment>
<comment type="interaction">
    <interactant intactId="EBI-81610">
        <id>O15287</id>
    </interactant>
    <interactant intactId="EBI-9675698">
        <id>P14079</id>
        <label>tax</label>
    </interactant>
    <organismsDiffer>true</organismsDiffer>
    <experiments>3</experiments>
</comment>
<comment type="subcellular location">
    <subcellularLocation>
        <location evidence="8">Nucleus</location>
    </subcellularLocation>
    <subcellularLocation>
        <location evidence="8">Cytoplasm</location>
    </subcellularLocation>
    <text>The major form is nuclear. The minor form is cytoplasmic.</text>
</comment>
<comment type="tissue specificity">
    <text>Highly expressed in testis and thymus. Found in lymphoblasts.</text>
</comment>
<comment type="disease" evidence="1 8">
    <disease id="DI-03136">
        <name>Fanconi anemia complementation group G</name>
        <acronym>FANCG</acronym>
        <description>A disorder affecting all bone marrow elements and resulting in anemia, leukopenia and thrombopenia. It is associated with cardiac, renal and limb malformations, dermal pigmentary changes, and a predisposition to the development of malignancies. At the cellular level it is associated with hypersensitivity to DNA-damaging agents, chromosomal instability (increased chromosome breakage) and defective DNA repair.</description>
        <dbReference type="MIM" id="614082"/>
    </disease>
    <text>The disease is caused by variants affecting the gene represented in this entry.</text>
</comment>
<comment type="online information" name="Fanconi Anemia Mutation Database">
    <link uri="https://www2.rockefeller.edu/fanconi/genes/jumpg"/>
</comment>
<comment type="online information" name="Atlas of Genetics and Cytogenetics in Oncology and Haematology">
    <link uri="https://atlasgeneticsoncology.org/gene/295/FANCG"/>
</comment>
<name>FANCG_HUMAN</name>
<dbReference type="EMBL" id="U70310">
    <property type="protein sequence ID" value="AAB80802.1"/>
    <property type="molecule type" value="mRNA"/>
</dbReference>
<dbReference type="EMBL" id="AJ007669">
    <property type="protein sequence ID" value="CAA07602.1"/>
    <property type="molecule type" value="mRNA"/>
</dbReference>
<dbReference type="EMBL" id="AY795970">
    <property type="protein sequence ID" value="AAV40841.1"/>
    <property type="molecule type" value="Genomic_DNA"/>
</dbReference>
<dbReference type="EMBL" id="AC004472">
    <property type="protein sequence ID" value="AAC07981.1"/>
    <property type="molecule type" value="Genomic_DNA"/>
</dbReference>
<dbReference type="EMBL" id="AL353795">
    <property type="status" value="NOT_ANNOTATED_CDS"/>
    <property type="molecule type" value="Genomic_DNA"/>
</dbReference>
<dbReference type="EMBL" id="BC000032">
    <property type="protein sequence ID" value="AAH00032.1"/>
    <property type="molecule type" value="mRNA"/>
</dbReference>
<dbReference type="EMBL" id="BC011623">
    <property type="protein sequence ID" value="AAH11623.1"/>
    <property type="molecule type" value="mRNA"/>
</dbReference>
<dbReference type="CCDS" id="CCDS6574.1"/>
<dbReference type="PIR" id="T02244">
    <property type="entry name" value="T02244"/>
</dbReference>
<dbReference type="RefSeq" id="NP_004620.1">
    <property type="nucleotide sequence ID" value="NM_004629.2"/>
</dbReference>
<dbReference type="PDB" id="7KZP">
    <property type="method" value="EM"/>
    <property type="resolution" value="3.10 A"/>
    <property type="chains" value="G/H=1-622"/>
</dbReference>
<dbReference type="PDB" id="7KZQ">
    <property type="method" value="EM"/>
    <property type="resolution" value="4.20 A"/>
    <property type="chains" value="G/H=1-622"/>
</dbReference>
<dbReference type="PDB" id="7KZR">
    <property type="method" value="EM"/>
    <property type="resolution" value="4.20 A"/>
    <property type="chains" value="G/H=1-622"/>
</dbReference>
<dbReference type="PDB" id="7KZS">
    <property type="method" value="EM"/>
    <property type="resolution" value="4.20 A"/>
    <property type="chains" value="G/H=1-622"/>
</dbReference>
<dbReference type="PDB" id="7KZT">
    <property type="method" value="EM"/>
    <property type="resolution" value="4.20 A"/>
    <property type="chains" value="G/H=1-622"/>
</dbReference>
<dbReference type="PDB" id="7KZV">
    <property type="method" value="EM"/>
    <property type="resolution" value="4.20 A"/>
    <property type="chains" value="G/H=1-622"/>
</dbReference>
<dbReference type="PDBsum" id="7KZP"/>
<dbReference type="PDBsum" id="7KZQ"/>
<dbReference type="PDBsum" id="7KZR"/>
<dbReference type="PDBsum" id="7KZS"/>
<dbReference type="PDBsum" id="7KZT"/>
<dbReference type="PDBsum" id="7KZV"/>
<dbReference type="EMDB" id="EMD-23085"/>
<dbReference type="EMDB" id="EMD-23086"/>
<dbReference type="EMDB" id="EMD-23087"/>
<dbReference type="EMDB" id="EMD-23088"/>
<dbReference type="EMDB" id="EMD-23089"/>
<dbReference type="EMDB" id="EMD-23090"/>
<dbReference type="SMR" id="O15287"/>
<dbReference type="BioGRID" id="108484">
    <property type="interactions" value="110"/>
</dbReference>
<dbReference type="ComplexPortal" id="CPX-6263">
    <property type="entry name" value="Fanconi anemia ubiquitin ligase complex"/>
</dbReference>
<dbReference type="CORUM" id="O15287"/>
<dbReference type="FunCoup" id="O15287">
    <property type="interactions" value="2227"/>
</dbReference>
<dbReference type="IntAct" id="O15287">
    <property type="interactions" value="102"/>
</dbReference>
<dbReference type="MINT" id="O15287"/>
<dbReference type="STRING" id="9606.ENSP00000367910"/>
<dbReference type="MoonDB" id="O15287">
    <property type="type" value="Predicted"/>
</dbReference>
<dbReference type="GlyGen" id="O15287">
    <property type="glycosylation" value="1 site, 1 O-linked glycan (1 site)"/>
</dbReference>
<dbReference type="iPTMnet" id="O15287"/>
<dbReference type="PhosphoSitePlus" id="O15287"/>
<dbReference type="BioMuta" id="FANCG"/>
<dbReference type="jPOST" id="O15287"/>
<dbReference type="MassIVE" id="O15287"/>
<dbReference type="PaxDb" id="9606-ENSP00000367910"/>
<dbReference type="PeptideAtlas" id="O15287"/>
<dbReference type="ProteomicsDB" id="48561"/>
<dbReference type="Pumba" id="O15287"/>
<dbReference type="Antibodypedia" id="25694">
    <property type="antibodies" value="440 antibodies from 36 providers"/>
</dbReference>
<dbReference type="DNASU" id="2189"/>
<dbReference type="Ensembl" id="ENST00000378643.8">
    <property type="protein sequence ID" value="ENSP00000367910.4"/>
    <property type="gene ID" value="ENSG00000221829.11"/>
</dbReference>
<dbReference type="Ensembl" id="ENST00000448890.2">
    <property type="protein sequence ID" value="ENSP00000409607.2"/>
    <property type="gene ID" value="ENSG00000221829.11"/>
</dbReference>
<dbReference type="GeneID" id="2189"/>
<dbReference type="KEGG" id="hsa:2189"/>
<dbReference type="MANE-Select" id="ENST00000378643.8">
    <property type="protein sequence ID" value="ENSP00000367910.4"/>
    <property type="RefSeq nucleotide sequence ID" value="NM_004629.2"/>
    <property type="RefSeq protein sequence ID" value="NP_004620.1"/>
</dbReference>
<dbReference type="AGR" id="HGNC:3588"/>
<dbReference type="CTD" id="2189"/>
<dbReference type="DisGeNET" id="2189"/>
<dbReference type="GeneCards" id="FANCG"/>
<dbReference type="GeneReviews" id="FANCG"/>
<dbReference type="HGNC" id="HGNC:3588">
    <property type="gene designation" value="FANCG"/>
</dbReference>
<dbReference type="HPA" id="ENSG00000221829">
    <property type="expression patterns" value="Low tissue specificity"/>
</dbReference>
<dbReference type="MalaCards" id="FANCG"/>
<dbReference type="MIM" id="602956">
    <property type="type" value="gene"/>
</dbReference>
<dbReference type="MIM" id="614082">
    <property type="type" value="phenotype"/>
</dbReference>
<dbReference type="neXtProt" id="NX_O15287"/>
<dbReference type="OpenTargets" id="ENSG00000221829"/>
<dbReference type="Orphanet" id="84">
    <property type="disease" value="Fanconi anemia"/>
</dbReference>
<dbReference type="PharmGKB" id="PA28002"/>
<dbReference type="VEuPathDB" id="HostDB:ENSG00000221829"/>
<dbReference type="eggNOG" id="ENOG502QVUI">
    <property type="taxonomic scope" value="Eukaryota"/>
</dbReference>
<dbReference type="GeneTree" id="ENSGT00390000007195"/>
<dbReference type="HOGENOM" id="CLU_018870_0_0_1"/>
<dbReference type="InParanoid" id="O15287"/>
<dbReference type="OMA" id="CCLAWRA"/>
<dbReference type="OrthoDB" id="6355951at2759"/>
<dbReference type="PAN-GO" id="O15287">
    <property type="GO annotations" value="2 GO annotations based on evolutionary models"/>
</dbReference>
<dbReference type="PhylomeDB" id="O15287"/>
<dbReference type="TreeFam" id="TF330722"/>
<dbReference type="PathwayCommons" id="O15287"/>
<dbReference type="Reactome" id="R-HSA-6783310">
    <property type="pathway name" value="Fanconi Anemia Pathway"/>
</dbReference>
<dbReference type="Reactome" id="R-HSA-9833482">
    <property type="pathway name" value="PKR-mediated signaling"/>
</dbReference>
<dbReference type="SignaLink" id="O15287"/>
<dbReference type="SIGNOR" id="O15287"/>
<dbReference type="BioGRID-ORCS" id="2189">
    <property type="hits" value="79 hits in 1172 CRISPR screens"/>
</dbReference>
<dbReference type="ChiTaRS" id="FANCG">
    <property type="organism name" value="human"/>
</dbReference>
<dbReference type="GeneWiki" id="FANCG"/>
<dbReference type="GenomeRNAi" id="2189"/>
<dbReference type="Pharos" id="O15287">
    <property type="development level" value="Tbio"/>
</dbReference>
<dbReference type="PRO" id="PR:O15287"/>
<dbReference type="Proteomes" id="UP000005640">
    <property type="component" value="Chromosome 9"/>
</dbReference>
<dbReference type="RNAct" id="O15287">
    <property type="molecule type" value="protein"/>
</dbReference>
<dbReference type="Bgee" id="ENSG00000221829">
    <property type="expression patterns" value="Expressed in ventricular zone and 160 other cell types or tissues"/>
</dbReference>
<dbReference type="ExpressionAtlas" id="O15287">
    <property type="expression patterns" value="baseline and differential"/>
</dbReference>
<dbReference type="GO" id="GO:0000785">
    <property type="term" value="C:chromatin"/>
    <property type="evidence" value="ECO:0000314"/>
    <property type="project" value="ComplexPortal"/>
</dbReference>
<dbReference type="GO" id="GO:0005829">
    <property type="term" value="C:cytosol"/>
    <property type="evidence" value="ECO:0000304"/>
    <property type="project" value="Reactome"/>
</dbReference>
<dbReference type="GO" id="GO:0043240">
    <property type="term" value="C:Fanconi anaemia nuclear complex"/>
    <property type="evidence" value="ECO:0000314"/>
    <property type="project" value="UniProtKB"/>
</dbReference>
<dbReference type="GO" id="GO:0005739">
    <property type="term" value="C:mitochondrion"/>
    <property type="evidence" value="ECO:0000314"/>
    <property type="project" value="UniProtKB"/>
</dbReference>
<dbReference type="GO" id="GO:0016607">
    <property type="term" value="C:nuclear speck"/>
    <property type="evidence" value="ECO:0000314"/>
    <property type="project" value="HPA"/>
</dbReference>
<dbReference type="GO" id="GO:0005654">
    <property type="term" value="C:nucleoplasm"/>
    <property type="evidence" value="ECO:0000304"/>
    <property type="project" value="Reactome"/>
</dbReference>
<dbReference type="GO" id="GO:0003684">
    <property type="term" value="F:damaged DNA binding"/>
    <property type="evidence" value="ECO:0000304"/>
    <property type="project" value="ProtInc"/>
</dbReference>
<dbReference type="GO" id="GO:0006974">
    <property type="term" value="P:DNA damage response"/>
    <property type="evidence" value="ECO:0000318"/>
    <property type="project" value="GO_Central"/>
</dbReference>
<dbReference type="GO" id="GO:0006281">
    <property type="term" value="P:DNA repair"/>
    <property type="evidence" value="ECO:0000304"/>
    <property type="project" value="ProtInc"/>
</dbReference>
<dbReference type="GO" id="GO:0036297">
    <property type="term" value="P:interstrand cross-link repair"/>
    <property type="evidence" value="ECO:0000303"/>
    <property type="project" value="ComplexPortal"/>
</dbReference>
<dbReference type="GO" id="GO:0007005">
    <property type="term" value="P:mitochondrion organization"/>
    <property type="evidence" value="ECO:0000315"/>
    <property type="project" value="UniProtKB"/>
</dbReference>
<dbReference type="GO" id="GO:0001541">
    <property type="term" value="P:ovarian follicle development"/>
    <property type="evidence" value="ECO:0007669"/>
    <property type="project" value="Ensembl"/>
</dbReference>
<dbReference type="GO" id="GO:0009314">
    <property type="term" value="P:response to radiation"/>
    <property type="evidence" value="ECO:0007669"/>
    <property type="project" value="Ensembl"/>
</dbReference>
<dbReference type="GO" id="GO:0007286">
    <property type="term" value="P:spermatid development"/>
    <property type="evidence" value="ECO:0007669"/>
    <property type="project" value="Ensembl"/>
</dbReference>
<dbReference type="FunFam" id="1.25.40.10:FF:000750">
    <property type="entry name" value="Fanconi anemia group G protein"/>
    <property type="match status" value="1"/>
</dbReference>
<dbReference type="Gene3D" id="1.25.40.10">
    <property type="entry name" value="Tetratricopeptide repeat domain"/>
    <property type="match status" value="1"/>
</dbReference>
<dbReference type="InterPro" id="IPR039684">
    <property type="entry name" value="FANCG"/>
</dbReference>
<dbReference type="InterPro" id="IPR011990">
    <property type="entry name" value="TPR-like_helical_dom_sf"/>
</dbReference>
<dbReference type="InterPro" id="IPR019734">
    <property type="entry name" value="TPR_rpt"/>
</dbReference>
<dbReference type="PANTHER" id="PTHR15254:SF2">
    <property type="entry name" value="FANCONI ANEMIA GROUP G PROTEIN"/>
    <property type="match status" value="1"/>
</dbReference>
<dbReference type="PANTHER" id="PTHR15254">
    <property type="entry name" value="FANCONI ANEMIA GROUP G PROTEIN FAMILY MEMBER"/>
    <property type="match status" value="1"/>
</dbReference>
<dbReference type="SMART" id="SM00028">
    <property type="entry name" value="TPR"/>
    <property type="match status" value="3"/>
</dbReference>
<dbReference type="SUPFAM" id="SSF48452">
    <property type="entry name" value="TPR-like"/>
    <property type="match status" value="2"/>
</dbReference>